<proteinExistence type="inferred from homology"/>
<dbReference type="EMBL" id="CP001120">
    <property type="protein sequence ID" value="ACF68968.1"/>
    <property type="molecule type" value="Genomic_DNA"/>
</dbReference>
<dbReference type="RefSeq" id="WP_000973681.1">
    <property type="nucleotide sequence ID" value="NC_011083.1"/>
</dbReference>
<dbReference type="SMR" id="B4TDL4"/>
<dbReference type="KEGG" id="seh:SeHA_C4573"/>
<dbReference type="HOGENOM" id="CLU_032473_4_1_6"/>
<dbReference type="Proteomes" id="UP000001866">
    <property type="component" value="Chromosome"/>
</dbReference>
<dbReference type="GO" id="GO:0009279">
    <property type="term" value="C:cell outer membrane"/>
    <property type="evidence" value="ECO:0007669"/>
    <property type="project" value="UniProtKB-SubCell"/>
</dbReference>
<dbReference type="GO" id="GO:0046930">
    <property type="term" value="C:pore complex"/>
    <property type="evidence" value="ECO:0007669"/>
    <property type="project" value="UniProtKB-KW"/>
</dbReference>
<dbReference type="GO" id="GO:0042958">
    <property type="term" value="F:maltodextrin transmembrane transporter activity"/>
    <property type="evidence" value="ECO:0007669"/>
    <property type="project" value="InterPro"/>
</dbReference>
<dbReference type="GO" id="GO:0015481">
    <property type="term" value="F:maltose transporting porin activity"/>
    <property type="evidence" value="ECO:0007669"/>
    <property type="project" value="InterPro"/>
</dbReference>
<dbReference type="GO" id="GO:0006811">
    <property type="term" value="P:monoatomic ion transport"/>
    <property type="evidence" value="ECO:0007669"/>
    <property type="project" value="UniProtKB-KW"/>
</dbReference>
<dbReference type="CDD" id="cd01346">
    <property type="entry name" value="Maltoporin-like"/>
    <property type="match status" value="1"/>
</dbReference>
<dbReference type="FunFam" id="2.40.170.10:FF:000001">
    <property type="entry name" value="Maltoporin"/>
    <property type="match status" value="1"/>
</dbReference>
<dbReference type="Gene3D" id="2.40.170.10">
    <property type="entry name" value="Porin, LamB type"/>
    <property type="match status" value="1"/>
</dbReference>
<dbReference type="HAMAP" id="MF_01301">
    <property type="entry name" value="LamB"/>
    <property type="match status" value="1"/>
</dbReference>
<dbReference type="InterPro" id="IPR050286">
    <property type="entry name" value="G_neg_Bact_CarbUptk_Porin"/>
</dbReference>
<dbReference type="InterPro" id="IPR023738">
    <property type="entry name" value="Maltoporin"/>
</dbReference>
<dbReference type="InterPro" id="IPR003192">
    <property type="entry name" value="Porin_LamB"/>
</dbReference>
<dbReference type="InterPro" id="IPR036998">
    <property type="entry name" value="Porin_LamB_sf"/>
</dbReference>
<dbReference type="NCBIfam" id="NF006860">
    <property type="entry name" value="PRK09360.1"/>
    <property type="match status" value="1"/>
</dbReference>
<dbReference type="PANTHER" id="PTHR38762">
    <property type="entry name" value="CRYPTIC OUTER MEMBRANE PORIN BGLH-RELATED"/>
    <property type="match status" value="1"/>
</dbReference>
<dbReference type="PANTHER" id="PTHR38762:SF1">
    <property type="entry name" value="CRYPTIC OUTER MEMBRANE PORIN BGLH-RELATED"/>
    <property type="match status" value="1"/>
</dbReference>
<dbReference type="Pfam" id="PF02264">
    <property type="entry name" value="LamB"/>
    <property type="match status" value="1"/>
</dbReference>
<dbReference type="SUPFAM" id="SSF56935">
    <property type="entry name" value="Porins"/>
    <property type="match status" value="1"/>
</dbReference>
<evidence type="ECO:0000255" key="1">
    <source>
        <dbReference type="HAMAP-Rule" id="MF_01301"/>
    </source>
</evidence>
<gene>
    <name evidence="1" type="primary">lamB</name>
    <name type="ordered locus">SeHA_C4573</name>
</gene>
<sequence length="452" mass="50587">MMITLRKLPLAVAVAAGVMSAQAMAVDFHGYARSGIGWTGSGGEQQCFQVTGAQSKYRLGNECETYAELKLGQEVWKEGDKSFYFDTNVAYSVNQQNDWESTDPAFREANVQGKNLIEWLPGSTIWAGKRFYQRHDVHMIDFYYWDISGPGAGIENIDLGFGKLSLAATRSTEAGGSYTFSSQNIYDEVKDTANDVFDVRLAGLQTNPDGVLELGVDYGRANTTDGYKLADGASKDGWMFTAEHTQSMLKGYNKFVVQYATDAMTTQGKGQARGSDGSSSFTEELPDGTKINYANKVINNNGNMWRILDHGAISLGDKWDLMYVGMYQNIDWDNNLGTEWWTVGVRPMYKWTPIMSTLLEVGYDNVKSQQTGDRNNQYKITLAQQWQAGDSIWSRPAIRIFATYAKWDEKWGYIKDGDNISRYAAATNSGISTNSRGDSDEWTFGAQMEIWW</sequence>
<reference key="1">
    <citation type="journal article" date="2011" name="J. Bacteriol.">
        <title>Comparative genomics of 28 Salmonella enterica isolates: evidence for CRISPR-mediated adaptive sublineage evolution.</title>
        <authorList>
            <person name="Fricke W.F."/>
            <person name="Mammel M.K."/>
            <person name="McDermott P.F."/>
            <person name="Tartera C."/>
            <person name="White D.G."/>
            <person name="Leclerc J.E."/>
            <person name="Ravel J."/>
            <person name="Cebula T.A."/>
        </authorList>
    </citation>
    <scope>NUCLEOTIDE SEQUENCE [LARGE SCALE GENOMIC DNA]</scope>
    <source>
        <strain>SL476</strain>
    </source>
</reference>
<keyword id="KW-0998">Cell outer membrane</keyword>
<keyword id="KW-0406">Ion transport</keyword>
<keyword id="KW-0472">Membrane</keyword>
<keyword id="KW-0626">Porin</keyword>
<keyword id="KW-0732">Signal</keyword>
<keyword id="KW-0762">Sugar transport</keyword>
<keyword id="KW-0812">Transmembrane</keyword>
<keyword id="KW-1134">Transmembrane beta strand</keyword>
<keyword id="KW-0813">Transport</keyword>
<feature type="signal peptide" evidence="1">
    <location>
        <begin position="1"/>
        <end position="25"/>
    </location>
</feature>
<feature type="chain" id="PRO_1000140491" description="Maltoporin">
    <location>
        <begin position="26"/>
        <end position="452"/>
    </location>
</feature>
<feature type="site" description="Greasy slide, important in sugar transport" evidence="1">
    <location>
        <position position="31"/>
    </location>
</feature>
<feature type="site" description="Greasy slide, important in sugar transport" evidence="1">
    <location>
        <position position="66"/>
    </location>
</feature>
<feature type="site" description="Greasy slide, important in sugar transport" evidence="1">
    <location>
        <position position="99"/>
    </location>
</feature>
<feature type="site" description="Important in sugar transport" evidence="1">
    <location>
        <position position="143"/>
    </location>
</feature>
<feature type="site" description="Greasy slide, important in sugar transport" evidence="1">
    <location>
        <position position="252"/>
    </location>
</feature>
<feature type="site" description="Greasy slide, important in sugar transport" evidence="1">
    <location>
        <position position="393"/>
    </location>
</feature>
<feature type="site" description="Greasy slide, important in sugar transport" evidence="1">
    <location>
        <position position="451"/>
    </location>
</feature>
<organism>
    <name type="scientific">Salmonella heidelberg (strain SL476)</name>
    <dbReference type="NCBI Taxonomy" id="454169"/>
    <lineage>
        <taxon>Bacteria</taxon>
        <taxon>Pseudomonadati</taxon>
        <taxon>Pseudomonadota</taxon>
        <taxon>Gammaproteobacteria</taxon>
        <taxon>Enterobacterales</taxon>
        <taxon>Enterobacteriaceae</taxon>
        <taxon>Salmonella</taxon>
    </lineage>
</organism>
<protein>
    <recommendedName>
        <fullName evidence="1">Maltoporin</fullName>
    </recommendedName>
    <alternativeName>
        <fullName evidence="1">Maltose-inducible porin</fullName>
    </alternativeName>
</protein>
<name>LAMB_SALHS</name>
<comment type="function">
    <text evidence="1">Involved in the transport of maltose and maltodextrins.</text>
</comment>
<comment type="catalytic activity">
    <reaction evidence="1">
        <text>beta-maltose(in) = beta-maltose(out)</text>
        <dbReference type="Rhea" id="RHEA:29731"/>
        <dbReference type="ChEBI" id="CHEBI:18147"/>
    </reaction>
</comment>
<comment type="subunit">
    <text evidence="1">Homotrimer formed of three 18-stranded antiparallel beta-barrels, containing three independent channels.</text>
</comment>
<comment type="subcellular location">
    <subcellularLocation>
        <location evidence="1">Cell outer membrane</location>
        <topology evidence="1">Multi-pass membrane protein</topology>
    </subcellularLocation>
</comment>
<comment type="induction">
    <text evidence="1">By maltose.</text>
</comment>
<comment type="similarity">
    <text evidence="1">Belongs to the porin LamB (TC 1.B.3) family.</text>
</comment>
<accession>B4TDL4</accession>